<reference key="1">
    <citation type="journal article" date="2005" name="Nature">
        <title>Genomic sequence of the pathogenic and allergenic filamentous fungus Aspergillus fumigatus.</title>
        <authorList>
            <person name="Nierman W.C."/>
            <person name="Pain A."/>
            <person name="Anderson M.J."/>
            <person name="Wortman J.R."/>
            <person name="Kim H.S."/>
            <person name="Arroyo J."/>
            <person name="Berriman M."/>
            <person name="Abe K."/>
            <person name="Archer D.B."/>
            <person name="Bermejo C."/>
            <person name="Bennett J.W."/>
            <person name="Bowyer P."/>
            <person name="Chen D."/>
            <person name="Collins M."/>
            <person name="Coulsen R."/>
            <person name="Davies R."/>
            <person name="Dyer P.S."/>
            <person name="Farman M.L."/>
            <person name="Fedorova N."/>
            <person name="Fedorova N.D."/>
            <person name="Feldblyum T.V."/>
            <person name="Fischer R."/>
            <person name="Fosker N."/>
            <person name="Fraser A."/>
            <person name="Garcia J.L."/>
            <person name="Garcia M.J."/>
            <person name="Goble A."/>
            <person name="Goldman G.H."/>
            <person name="Gomi K."/>
            <person name="Griffith-Jones S."/>
            <person name="Gwilliam R."/>
            <person name="Haas B.J."/>
            <person name="Haas H."/>
            <person name="Harris D.E."/>
            <person name="Horiuchi H."/>
            <person name="Huang J."/>
            <person name="Humphray S."/>
            <person name="Jimenez J."/>
            <person name="Keller N."/>
            <person name="Khouri H."/>
            <person name="Kitamoto K."/>
            <person name="Kobayashi T."/>
            <person name="Konzack S."/>
            <person name="Kulkarni R."/>
            <person name="Kumagai T."/>
            <person name="Lafton A."/>
            <person name="Latge J.-P."/>
            <person name="Li W."/>
            <person name="Lord A."/>
            <person name="Lu C."/>
            <person name="Majoros W.H."/>
            <person name="May G.S."/>
            <person name="Miller B.L."/>
            <person name="Mohamoud Y."/>
            <person name="Molina M."/>
            <person name="Monod M."/>
            <person name="Mouyna I."/>
            <person name="Mulligan S."/>
            <person name="Murphy L.D."/>
            <person name="O'Neil S."/>
            <person name="Paulsen I."/>
            <person name="Penalva M.A."/>
            <person name="Pertea M."/>
            <person name="Price C."/>
            <person name="Pritchard B.L."/>
            <person name="Quail M.A."/>
            <person name="Rabbinowitsch E."/>
            <person name="Rawlins N."/>
            <person name="Rajandream M.A."/>
            <person name="Reichard U."/>
            <person name="Renauld H."/>
            <person name="Robson G.D."/>
            <person name="Rodriguez de Cordoba S."/>
            <person name="Rodriguez-Pena J.M."/>
            <person name="Ronning C.M."/>
            <person name="Rutter S."/>
            <person name="Salzberg S.L."/>
            <person name="Sanchez M."/>
            <person name="Sanchez-Ferrero J.C."/>
            <person name="Saunders D."/>
            <person name="Seeger K."/>
            <person name="Squares R."/>
            <person name="Squares S."/>
            <person name="Takeuchi M."/>
            <person name="Tekaia F."/>
            <person name="Turner G."/>
            <person name="Vazquez de Aldana C.R."/>
            <person name="Weidman J."/>
            <person name="White O."/>
            <person name="Woodward J.R."/>
            <person name="Yu J.-H."/>
            <person name="Fraser C.M."/>
            <person name="Galagan J.E."/>
            <person name="Asai K."/>
            <person name="Machida M."/>
            <person name="Hall N."/>
            <person name="Barrell B.G."/>
            <person name="Denning D.W."/>
        </authorList>
    </citation>
    <scope>NUCLEOTIDE SEQUENCE [LARGE SCALE GENOMIC DNA]</scope>
    <source>
        <strain>ATCC MYA-4609 / CBS 101355 / FGSC A1100 / Af293</strain>
    </source>
</reference>
<reference key="2">
    <citation type="journal article" date="2019" name="Nat. Microbiol.">
        <title>Fungal biofilm morphology impacts hypoxia fitness and disease progression.</title>
        <authorList>
            <person name="Kowalski C.H."/>
            <person name="Kerkaert J.D."/>
            <person name="Liu K.W."/>
            <person name="Bond M.C."/>
            <person name="Hartmann R."/>
            <person name="Nadell C.D."/>
            <person name="Stajich J.E."/>
            <person name="Cramer R.A."/>
        </authorList>
    </citation>
    <scope>FUNCTION</scope>
    <scope>INDUCTION</scope>
</reference>
<keyword id="KW-0130">Cell adhesion</keyword>
<keyword id="KW-1185">Reference proteome</keyword>
<keyword id="KW-0843">Virulence</keyword>
<proteinExistence type="evidence at transcript level"/>
<dbReference type="EMBL" id="AAHF01000003">
    <property type="protein sequence ID" value="EAL91126.1"/>
    <property type="molecule type" value="Genomic_DNA"/>
</dbReference>
<dbReference type="RefSeq" id="XP_753164.1">
    <property type="nucleotide sequence ID" value="XM_748071.1"/>
</dbReference>
<dbReference type="STRING" id="330879.Q4WWA0"/>
<dbReference type="EnsemblFungi" id="EAL91126">
    <property type="protein sequence ID" value="EAL91126"/>
    <property type="gene ID" value="AFUA_5G14930"/>
</dbReference>
<dbReference type="GeneID" id="3511193"/>
<dbReference type="KEGG" id="afm:AFUA_5G14930"/>
<dbReference type="eggNOG" id="KOG1565">
    <property type="taxonomic scope" value="Eukaryota"/>
</dbReference>
<dbReference type="HOGENOM" id="CLU_049464_0_0_1"/>
<dbReference type="InParanoid" id="Q4WWA0"/>
<dbReference type="OMA" id="SIGREPY"/>
<dbReference type="OrthoDB" id="3594103at2759"/>
<dbReference type="Proteomes" id="UP000002530">
    <property type="component" value="Chromosome 5"/>
</dbReference>
<dbReference type="GO" id="GO:0007155">
    <property type="term" value="P:cell adhesion"/>
    <property type="evidence" value="ECO:0007669"/>
    <property type="project" value="UniProtKB-KW"/>
</dbReference>
<dbReference type="PANTHER" id="PTHR37538">
    <property type="entry name" value="BTB DOMAIN-CONTAINING PROTEIN"/>
    <property type="match status" value="1"/>
</dbReference>
<dbReference type="PANTHER" id="PTHR37538:SF1">
    <property type="entry name" value="BTB DOMAIN-CONTAINING PROTEIN"/>
    <property type="match status" value="1"/>
</dbReference>
<protein>
    <recommendedName>
        <fullName evidence="3">Subtelomeric hrmA-associated cluster protein AFUA_5G14930</fullName>
    </recommendedName>
</protein>
<evidence type="ECO:0000256" key="1">
    <source>
        <dbReference type="SAM" id="MobiDB-lite"/>
    </source>
</evidence>
<evidence type="ECO:0000269" key="2">
    <source>
    </source>
</evidence>
<evidence type="ECO:0000303" key="3">
    <source>
    </source>
</evidence>
<sequence length="396" mass="43709">MANKKKPSIKKSVNEPNPHLKQSHASGSQQSLGDSLIEYNQPESSIPVCYIQNYPQFSDSYLYEPPFILSKVNEEVGHTVVHFLCTGNYETLRTASEPGASKIGIEFRRSMLVYQAAKEYDLYDLETYAKKYIEVFGESMSIFDIMEAAREIYSKLPKDEIWLTGYIYKQLEIAFSLDRNIFQRVDFYDGVGKDPNFDKDVMRMVVNIYSEVLSRQLDETTPEGSIAEDGAAEDCAAEDGAVEDGVVEEGAVEEGAVEEGAVEDGAVKDGAVEDGAVENGVAEECGAAEDVADDGALKEAVNLGIPSQPSGTALSFEWDHWTSGSKMGASFSGNSQWKYEKDTNSLYPENKAEESGGFNAAYEGIKSKKKKDKKKKKSNKDKKVEELAEPVPECGR</sequence>
<organism>
    <name type="scientific">Aspergillus fumigatus (strain ATCC MYA-4609 / CBS 101355 / FGSC A1100 / Af293)</name>
    <name type="common">Neosartorya fumigata</name>
    <dbReference type="NCBI Taxonomy" id="330879"/>
    <lineage>
        <taxon>Eukaryota</taxon>
        <taxon>Fungi</taxon>
        <taxon>Dikarya</taxon>
        <taxon>Ascomycota</taxon>
        <taxon>Pezizomycotina</taxon>
        <taxon>Eurotiomycetes</taxon>
        <taxon>Eurotiomycetidae</taxon>
        <taxon>Eurotiales</taxon>
        <taxon>Aspergillaceae</taxon>
        <taxon>Aspergillus</taxon>
        <taxon>Aspergillus subgen. Fumigati</taxon>
    </lineage>
</organism>
<feature type="chain" id="PRO_0000460425" description="Subtelomeric hrmA-associated cluster protein AFUA_5G14930">
    <location>
        <begin position="1"/>
        <end position="396"/>
    </location>
</feature>
<feature type="region of interest" description="Disordered" evidence="1">
    <location>
        <begin position="1"/>
        <end position="32"/>
    </location>
</feature>
<feature type="region of interest" description="Disordered" evidence="1">
    <location>
        <begin position="347"/>
        <end position="396"/>
    </location>
</feature>
<feature type="compositionally biased region" description="Polar residues" evidence="1">
    <location>
        <begin position="23"/>
        <end position="32"/>
    </location>
</feature>
<feature type="compositionally biased region" description="Basic residues" evidence="1">
    <location>
        <begin position="367"/>
        <end position="380"/>
    </location>
</feature>
<gene>
    <name type="ORF">AFUA_5G14930</name>
</gene>
<accession>Q4WWA0</accession>
<name>HAC6_ASPFU</name>
<comment type="function">
    <text evidence="2">Part of the subtelomeric hrmA-associated cluster (HAC) containing genes that alter the hyphal surface (such as reduced total chitin or increased beta-glucan exposure) and perturb inter-hyphal interactions within the developing biofilms, resulting in a loss of vertically aligned polarized growing filaments (PubMed:31548684). Consequently, this hypoxia-typic morphotype (called H-MORPH) with altered biofilm architecture leads to increased hypoxia fitness, increased host inflammation, rapid disease progression, and mortality in a murine model of invasive aspergillosis (PubMed:31548684).</text>
</comment>
<comment type="induction">
    <text evidence="2">Expression is regulated by the hypoxia responsive morphology factor A (hrmA).</text>
</comment>